<protein>
    <recommendedName>
        <fullName evidence="1">Large ribosomal subunit protein uL22</fullName>
    </recommendedName>
    <alternativeName>
        <fullName evidence="2">50S ribosomal protein L22</fullName>
    </alternativeName>
</protein>
<dbReference type="EMBL" id="CP000780">
    <property type="protein sequence ID" value="ABS55055.1"/>
    <property type="molecule type" value="Genomic_DNA"/>
</dbReference>
<dbReference type="RefSeq" id="WP_012106076.1">
    <property type="nucleotide sequence ID" value="NC_009712.1"/>
</dbReference>
<dbReference type="SMR" id="A7I5P4"/>
<dbReference type="STRING" id="456442.Mboo_0537"/>
<dbReference type="GeneID" id="5411764"/>
<dbReference type="KEGG" id="mbn:Mboo_0537"/>
<dbReference type="eggNOG" id="arCOG04098">
    <property type="taxonomic scope" value="Archaea"/>
</dbReference>
<dbReference type="HOGENOM" id="CLU_083987_0_2_2"/>
<dbReference type="OrthoDB" id="314984at2157"/>
<dbReference type="Proteomes" id="UP000002408">
    <property type="component" value="Chromosome"/>
</dbReference>
<dbReference type="GO" id="GO:0022625">
    <property type="term" value="C:cytosolic large ribosomal subunit"/>
    <property type="evidence" value="ECO:0007669"/>
    <property type="project" value="TreeGrafter"/>
</dbReference>
<dbReference type="GO" id="GO:0019843">
    <property type="term" value="F:rRNA binding"/>
    <property type="evidence" value="ECO:0007669"/>
    <property type="project" value="UniProtKB-UniRule"/>
</dbReference>
<dbReference type="GO" id="GO:0003735">
    <property type="term" value="F:structural constituent of ribosome"/>
    <property type="evidence" value="ECO:0007669"/>
    <property type="project" value="InterPro"/>
</dbReference>
<dbReference type="GO" id="GO:0002181">
    <property type="term" value="P:cytoplasmic translation"/>
    <property type="evidence" value="ECO:0007669"/>
    <property type="project" value="TreeGrafter"/>
</dbReference>
<dbReference type="CDD" id="cd00336">
    <property type="entry name" value="Ribosomal_L22"/>
    <property type="match status" value="1"/>
</dbReference>
<dbReference type="Gene3D" id="3.90.470.10">
    <property type="entry name" value="Ribosomal protein L22/L17"/>
    <property type="match status" value="1"/>
</dbReference>
<dbReference type="HAMAP" id="MF_01331_A">
    <property type="entry name" value="Ribosomal_uL22_A"/>
    <property type="match status" value="1"/>
</dbReference>
<dbReference type="InterPro" id="IPR001063">
    <property type="entry name" value="Ribosomal_uL22"/>
</dbReference>
<dbReference type="InterPro" id="IPR018260">
    <property type="entry name" value="Ribosomal_uL22_CS"/>
</dbReference>
<dbReference type="InterPro" id="IPR005721">
    <property type="entry name" value="Ribosomal_uL22_euk/arc"/>
</dbReference>
<dbReference type="InterPro" id="IPR036394">
    <property type="entry name" value="Ribosomal_uL22_sf"/>
</dbReference>
<dbReference type="NCBIfam" id="NF003260">
    <property type="entry name" value="PRK04223.1"/>
    <property type="match status" value="1"/>
</dbReference>
<dbReference type="NCBIfam" id="TIGR01038">
    <property type="entry name" value="uL22_arch_euk"/>
    <property type="match status" value="1"/>
</dbReference>
<dbReference type="PANTHER" id="PTHR11593">
    <property type="entry name" value="60S RIBOSOMAL PROTEIN L17"/>
    <property type="match status" value="1"/>
</dbReference>
<dbReference type="PANTHER" id="PTHR11593:SF10">
    <property type="entry name" value="60S RIBOSOMAL PROTEIN L17"/>
    <property type="match status" value="1"/>
</dbReference>
<dbReference type="Pfam" id="PF00237">
    <property type="entry name" value="Ribosomal_L22"/>
    <property type="match status" value="1"/>
</dbReference>
<dbReference type="SUPFAM" id="SSF54843">
    <property type="entry name" value="Ribosomal protein L22"/>
    <property type="match status" value="1"/>
</dbReference>
<dbReference type="PROSITE" id="PS00464">
    <property type="entry name" value="RIBOSOMAL_L22"/>
    <property type="match status" value="1"/>
</dbReference>
<feature type="chain" id="PRO_1000052603" description="Large ribosomal subunit protein uL22">
    <location>
        <begin position="1"/>
        <end position="154"/>
    </location>
</feature>
<reference key="1">
    <citation type="journal article" date="2015" name="Microbiology">
        <title>Genome of Methanoregula boonei 6A8 reveals adaptations to oligotrophic peatland environments.</title>
        <authorList>
            <person name="Braeuer S."/>
            <person name="Cadillo-Quiroz H."/>
            <person name="Kyrpides N."/>
            <person name="Woyke T."/>
            <person name="Goodwin L."/>
            <person name="Detter C."/>
            <person name="Podell S."/>
            <person name="Yavitt J.B."/>
            <person name="Zinder S.H."/>
        </authorList>
    </citation>
    <scope>NUCLEOTIDE SEQUENCE [LARGE SCALE GENOMIC DNA]</scope>
    <source>
        <strain>DSM 21154 / JCM 14090 / 6A8</strain>
    </source>
</reference>
<keyword id="KW-1185">Reference proteome</keyword>
<keyword id="KW-0687">Ribonucleoprotein</keyword>
<keyword id="KW-0689">Ribosomal protein</keyword>
<keyword id="KW-0694">RNA-binding</keyword>
<keyword id="KW-0699">rRNA-binding</keyword>
<evidence type="ECO:0000255" key="1">
    <source>
        <dbReference type="HAMAP-Rule" id="MF_01331"/>
    </source>
</evidence>
<evidence type="ECO:0000305" key="2"/>
<gene>
    <name evidence="1" type="primary">rpl22</name>
    <name type="ordered locus">Mboo_0537</name>
</gene>
<comment type="function">
    <text evidence="1">This protein binds specifically to 23S rRNA. It makes multiple contacts with different domains of the 23S rRNA in the assembled 50S subunit and ribosome.</text>
</comment>
<comment type="function">
    <text evidence="1">The globular domain of the protein is located near the polypeptide exit tunnel on the outside of the subunit, while an extended beta-hairpin is found that lines the wall of the exit tunnel in the center of the 70S ribosome.</text>
</comment>
<comment type="subunit">
    <text evidence="1">Part of the 50S ribosomal subunit.</text>
</comment>
<comment type="similarity">
    <text evidence="1">Belongs to the universal ribosomal protein uL22 family.</text>
</comment>
<proteinExistence type="inferred from homology"/>
<name>RL22_METB6</name>
<accession>A7I5P4</accession>
<organism>
    <name type="scientific">Methanoregula boonei (strain DSM 21154 / JCM 14090 / 6A8)</name>
    <dbReference type="NCBI Taxonomy" id="456442"/>
    <lineage>
        <taxon>Archaea</taxon>
        <taxon>Methanobacteriati</taxon>
        <taxon>Methanobacteriota</taxon>
        <taxon>Stenosarchaea group</taxon>
        <taxon>Methanomicrobia</taxon>
        <taxon>Methanomicrobiales</taxon>
        <taxon>Methanoregulaceae</taxon>
        <taxon>Methanoregula</taxon>
    </lineage>
</organism>
<sequence>MARIAYSTKIEGDNLARGKANELSISPKHSIEIADFIRHQRVNDALAYLADVVALKKAIPFRHFNRNVAHKRGLPGNWDAGRYPVKASKAYIRILESIKKNAEYTGLDTENLEIIHASANRGRAQKAYFPRAMGRASPKVRETVNIEIVVREVA</sequence>